<proteinExistence type="evidence at transcript level"/>
<comment type="subunit">
    <text evidence="1">Interacts with atp1b1 C-terminus.</text>
</comment>
<comment type="subcellular location">
    <subcellularLocation>
        <location evidence="3">Cell membrane</location>
        <topology evidence="3">Multi-pass membrane protein</topology>
    </subcellularLocation>
</comment>
<comment type="similarity">
    <text evidence="3">Belongs to the NKAIN family.</text>
</comment>
<gene>
    <name type="primary">nkain1</name>
    <name type="synonym">fam77c</name>
</gene>
<accession>Q0IHU6</accession>
<accession>A4IHR6</accession>
<feature type="chain" id="PRO_0000263646" description="Sodium/potassium-transporting ATPase subunit beta-1-interacting protein 1">
    <location>
        <begin position="1"/>
        <end position="207"/>
    </location>
</feature>
<feature type="transmembrane region" description="Helical" evidence="2">
    <location>
        <begin position="2"/>
        <end position="22"/>
    </location>
</feature>
<feature type="transmembrane region" description="Helical" evidence="2">
    <location>
        <begin position="35"/>
        <end position="55"/>
    </location>
</feature>
<feature type="transmembrane region" description="Helical" evidence="2">
    <location>
        <begin position="62"/>
        <end position="82"/>
    </location>
</feature>
<feature type="transmembrane region" description="Helical" evidence="2">
    <location>
        <begin position="147"/>
        <end position="167"/>
    </location>
</feature>
<feature type="glycosylation site" description="N-linked (GlcNAc...) asparagine" evidence="2">
    <location>
        <position position="100"/>
    </location>
</feature>
<reference key="1">
    <citation type="submission" date="2007-03" db="EMBL/GenBank/DDBJ databases">
        <authorList>
            <consortium name="NIH - Xenopus Gene Collection (XGC) project"/>
        </authorList>
    </citation>
    <scope>NUCLEOTIDE SEQUENCE [LARGE SCALE MRNA]</scope>
    <source>
        <tissue>Brain</tissue>
        <tissue>Embryo</tissue>
    </source>
</reference>
<evidence type="ECO:0000250" key="1"/>
<evidence type="ECO:0000255" key="2"/>
<evidence type="ECO:0000305" key="3"/>
<sequence length="207" mass="23670">MGRCSGRCTLVGICCLQLAAALQRQIFDFLGYQWAPILANFLHIMVVILGILGTLHYRSRYLILYSIWLALWVAWNAFIICFYLEVGHFSQHRDLIMNFNTSMHRSWWMENGPGCLVTPVRGPPLPLADHHMVTVTGCLLDYPYIEALSSALQIFLALFGFVYACYVSKVFMDEEDSFDFIGSYDSYGYQAPMKTSHLQLQPLYKPG</sequence>
<protein>
    <recommendedName>
        <fullName>Sodium/potassium-transporting ATPase subunit beta-1-interacting protein 1</fullName>
        <shortName>Na(+)/K(+)-transporting ATPase subunit beta-1-interacting protein 1</shortName>
    </recommendedName>
    <alternativeName>
        <fullName>Protein FAM77C</fullName>
    </alternativeName>
</protein>
<dbReference type="EMBL" id="BC122964">
    <property type="protein sequence ID" value="AAI22965.1"/>
    <property type="molecule type" value="mRNA"/>
</dbReference>
<dbReference type="EMBL" id="BC135653">
    <property type="protein sequence ID" value="AAI35654.1"/>
    <property type="molecule type" value="mRNA"/>
</dbReference>
<dbReference type="RefSeq" id="NP_001072596.1">
    <property type="nucleotide sequence ID" value="NM_001079128.1"/>
</dbReference>
<dbReference type="SMR" id="Q0IHU6"/>
<dbReference type="FunCoup" id="Q0IHU6">
    <property type="interactions" value="75"/>
</dbReference>
<dbReference type="GlyCosmos" id="Q0IHU6">
    <property type="glycosylation" value="1 site, No reported glycans"/>
</dbReference>
<dbReference type="PaxDb" id="8364-ENSXETP00000028231"/>
<dbReference type="DNASU" id="780051"/>
<dbReference type="GeneID" id="780051"/>
<dbReference type="KEGG" id="xtr:780051"/>
<dbReference type="AGR" id="Xenbase:XB-GENE-946558"/>
<dbReference type="CTD" id="79570"/>
<dbReference type="Xenbase" id="XB-GENE-946558">
    <property type="gene designation" value="nkain1"/>
</dbReference>
<dbReference type="eggNOG" id="KOG4556">
    <property type="taxonomic scope" value="Eukaryota"/>
</dbReference>
<dbReference type="HOGENOM" id="CLU_090781_0_0_1"/>
<dbReference type="InParanoid" id="Q0IHU6"/>
<dbReference type="OMA" id="DSHMAPD"/>
<dbReference type="OrthoDB" id="10050321at2759"/>
<dbReference type="PhylomeDB" id="Q0IHU6"/>
<dbReference type="TreeFam" id="TF321348"/>
<dbReference type="Proteomes" id="UP000008143">
    <property type="component" value="Chromosome 2"/>
</dbReference>
<dbReference type="Bgee" id="ENSXETG00000012908">
    <property type="expression patterns" value="Expressed in embryo and 2 other cell types or tissues"/>
</dbReference>
<dbReference type="ExpressionAtlas" id="Q0IHU6">
    <property type="expression patterns" value="baseline"/>
</dbReference>
<dbReference type="GO" id="GO:0005886">
    <property type="term" value="C:plasma membrane"/>
    <property type="evidence" value="ECO:0007669"/>
    <property type="project" value="UniProtKB-SubCell"/>
</dbReference>
<dbReference type="InterPro" id="IPR008516">
    <property type="entry name" value="Na/K-Atpase_Interacting"/>
</dbReference>
<dbReference type="PANTHER" id="PTHR13084:SF4">
    <property type="entry name" value="SODIUM_POTASSIUM-TRANSPORTING ATPASE SUBUNIT BETA-1-INTERACTING PROTEIN 1"/>
    <property type="match status" value="1"/>
</dbReference>
<dbReference type="PANTHER" id="PTHR13084">
    <property type="entry name" value="T-CELL LYMPHOMA BREAKPOINT-ASSOCIATED TARGET 1-RELATED"/>
    <property type="match status" value="1"/>
</dbReference>
<dbReference type="Pfam" id="PF05640">
    <property type="entry name" value="NKAIN"/>
    <property type="match status" value="1"/>
</dbReference>
<organism>
    <name type="scientific">Xenopus tropicalis</name>
    <name type="common">Western clawed frog</name>
    <name type="synonym">Silurana tropicalis</name>
    <dbReference type="NCBI Taxonomy" id="8364"/>
    <lineage>
        <taxon>Eukaryota</taxon>
        <taxon>Metazoa</taxon>
        <taxon>Chordata</taxon>
        <taxon>Craniata</taxon>
        <taxon>Vertebrata</taxon>
        <taxon>Euteleostomi</taxon>
        <taxon>Amphibia</taxon>
        <taxon>Batrachia</taxon>
        <taxon>Anura</taxon>
        <taxon>Pipoidea</taxon>
        <taxon>Pipidae</taxon>
        <taxon>Xenopodinae</taxon>
        <taxon>Xenopus</taxon>
        <taxon>Silurana</taxon>
    </lineage>
</organism>
<keyword id="KW-1003">Cell membrane</keyword>
<keyword id="KW-0325">Glycoprotein</keyword>
<keyword id="KW-0472">Membrane</keyword>
<keyword id="KW-1185">Reference proteome</keyword>
<keyword id="KW-0812">Transmembrane</keyword>
<keyword id="KW-1133">Transmembrane helix</keyword>
<name>NKAI1_XENTR</name>